<accession>Q73F75</accession>
<sequence length="216" mass="23769">MNLILMGLPGAGKGTQAEQIVAKYNIPHISTGDMFRAAMKAETEMGLQAKSFIDKGALVPDEVTIGIVRERLSQEDCVRGFLLDGFPRTVAQASALEEIMKDLGKKIDYVLNINVDSGLLLKRLTGRRICKECGATYHLEFNPPAKADVCDKCGGELYQRSDDNEETVANRLDVNIKQTKPLLDFYEELGYLQSINGEQDINKVFADIDVLIGGLA</sequence>
<dbReference type="EC" id="2.7.4.3" evidence="1"/>
<dbReference type="EMBL" id="AE017194">
    <property type="protein sequence ID" value="AAS39067.1"/>
    <property type="molecule type" value="Genomic_DNA"/>
</dbReference>
<dbReference type="SMR" id="Q73F75"/>
<dbReference type="KEGG" id="bca:BCE_0131"/>
<dbReference type="HOGENOM" id="CLU_032354_1_2_9"/>
<dbReference type="UniPathway" id="UPA00588">
    <property type="reaction ID" value="UER00649"/>
</dbReference>
<dbReference type="Proteomes" id="UP000002527">
    <property type="component" value="Chromosome"/>
</dbReference>
<dbReference type="GO" id="GO:0005737">
    <property type="term" value="C:cytoplasm"/>
    <property type="evidence" value="ECO:0007669"/>
    <property type="project" value="UniProtKB-SubCell"/>
</dbReference>
<dbReference type="GO" id="GO:0004017">
    <property type="term" value="F:adenylate kinase activity"/>
    <property type="evidence" value="ECO:0007669"/>
    <property type="project" value="UniProtKB-UniRule"/>
</dbReference>
<dbReference type="GO" id="GO:0005524">
    <property type="term" value="F:ATP binding"/>
    <property type="evidence" value="ECO:0007669"/>
    <property type="project" value="UniProtKB-UniRule"/>
</dbReference>
<dbReference type="GO" id="GO:0008270">
    <property type="term" value="F:zinc ion binding"/>
    <property type="evidence" value="ECO:0007669"/>
    <property type="project" value="UniProtKB-UniRule"/>
</dbReference>
<dbReference type="GO" id="GO:0044209">
    <property type="term" value="P:AMP salvage"/>
    <property type="evidence" value="ECO:0007669"/>
    <property type="project" value="UniProtKB-UniRule"/>
</dbReference>
<dbReference type="CDD" id="cd01428">
    <property type="entry name" value="ADK"/>
    <property type="match status" value="1"/>
</dbReference>
<dbReference type="FunFam" id="3.40.50.300:FF:000106">
    <property type="entry name" value="Adenylate kinase mitochondrial"/>
    <property type="match status" value="1"/>
</dbReference>
<dbReference type="Gene3D" id="3.40.50.300">
    <property type="entry name" value="P-loop containing nucleotide triphosphate hydrolases"/>
    <property type="match status" value="1"/>
</dbReference>
<dbReference type="HAMAP" id="MF_00235">
    <property type="entry name" value="Adenylate_kinase_Adk"/>
    <property type="match status" value="1"/>
</dbReference>
<dbReference type="InterPro" id="IPR006259">
    <property type="entry name" value="Adenyl_kin_sub"/>
</dbReference>
<dbReference type="InterPro" id="IPR000850">
    <property type="entry name" value="Adenylat/UMP-CMP_kin"/>
</dbReference>
<dbReference type="InterPro" id="IPR033690">
    <property type="entry name" value="Adenylat_kinase_CS"/>
</dbReference>
<dbReference type="InterPro" id="IPR007862">
    <property type="entry name" value="Adenylate_kinase_lid-dom"/>
</dbReference>
<dbReference type="InterPro" id="IPR027417">
    <property type="entry name" value="P-loop_NTPase"/>
</dbReference>
<dbReference type="NCBIfam" id="TIGR01351">
    <property type="entry name" value="adk"/>
    <property type="match status" value="1"/>
</dbReference>
<dbReference type="NCBIfam" id="NF001380">
    <property type="entry name" value="PRK00279.1-2"/>
    <property type="match status" value="1"/>
</dbReference>
<dbReference type="NCBIfam" id="NF001381">
    <property type="entry name" value="PRK00279.1-3"/>
    <property type="match status" value="1"/>
</dbReference>
<dbReference type="NCBIfam" id="NF011100">
    <property type="entry name" value="PRK14527.1"/>
    <property type="match status" value="1"/>
</dbReference>
<dbReference type="PANTHER" id="PTHR23359">
    <property type="entry name" value="NUCLEOTIDE KINASE"/>
    <property type="match status" value="1"/>
</dbReference>
<dbReference type="Pfam" id="PF00406">
    <property type="entry name" value="ADK"/>
    <property type="match status" value="1"/>
</dbReference>
<dbReference type="Pfam" id="PF05191">
    <property type="entry name" value="ADK_lid"/>
    <property type="match status" value="1"/>
</dbReference>
<dbReference type="PRINTS" id="PR00094">
    <property type="entry name" value="ADENYLTKNASE"/>
</dbReference>
<dbReference type="SUPFAM" id="SSF52540">
    <property type="entry name" value="P-loop containing nucleoside triphosphate hydrolases"/>
    <property type="match status" value="1"/>
</dbReference>
<dbReference type="PROSITE" id="PS00113">
    <property type="entry name" value="ADENYLATE_KINASE"/>
    <property type="match status" value="1"/>
</dbReference>
<gene>
    <name evidence="1" type="primary">adk</name>
    <name type="ordered locus">BCE_0131</name>
</gene>
<comment type="function">
    <text evidence="1">Catalyzes the reversible transfer of the terminal phosphate group between ATP and AMP. Plays an important role in cellular energy homeostasis and in adenine nucleotide metabolism.</text>
</comment>
<comment type="catalytic activity">
    <reaction evidence="1">
        <text>AMP + ATP = 2 ADP</text>
        <dbReference type="Rhea" id="RHEA:12973"/>
        <dbReference type="ChEBI" id="CHEBI:30616"/>
        <dbReference type="ChEBI" id="CHEBI:456215"/>
        <dbReference type="ChEBI" id="CHEBI:456216"/>
        <dbReference type="EC" id="2.7.4.3"/>
    </reaction>
</comment>
<comment type="pathway">
    <text evidence="1">Purine metabolism; AMP biosynthesis via salvage pathway; AMP from ADP: step 1/1.</text>
</comment>
<comment type="subunit">
    <text evidence="1">Monomer.</text>
</comment>
<comment type="subcellular location">
    <subcellularLocation>
        <location evidence="1">Cytoplasm</location>
    </subcellularLocation>
</comment>
<comment type="domain">
    <text evidence="1">Consists of three domains, a large central CORE domain and two small peripheral domains, NMPbind and LID, which undergo movements during catalysis. The LID domain closes over the site of phosphoryl transfer upon ATP binding. Assembling and dissambling the active center during each catalytic cycle provides an effective means to prevent ATP hydrolysis. Some bacteria have evolved a zinc-coordinating structure that stabilizes the LID domain.</text>
</comment>
<comment type="similarity">
    <text evidence="1">Belongs to the adenylate kinase family.</text>
</comment>
<reference key="1">
    <citation type="journal article" date="2004" name="Nucleic Acids Res.">
        <title>The genome sequence of Bacillus cereus ATCC 10987 reveals metabolic adaptations and a large plasmid related to Bacillus anthracis pXO1.</title>
        <authorList>
            <person name="Rasko D.A."/>
            <person name="Ravel J."/>
            <person name="Oekstad O.A."/>
            <person name="Helgason E."/>
            <person name="Cer R.Z."/>
            <person name="Jiang L."/>
            <person name="Shores K.A."/>
            <person name="Fouts D.E."/>
            <person name="Tourasse N.J."/>
            <person name="Angiuoli S.V."/>
            <person name="Kolonay J.F."/>
            <person name="Nelson W.C."/>
            <person name="Kolstoe A.-B."/>
            <person name="Fraser C.M."/>
            <person name="Read T.D."/>
        </authorList>
    </citation>
    <scope>NUCLEOTIDE SEQUENCE [LARGE SCALE GENOMIC DNA]</scope>
    <source>
        <strain>ATCC 10987 / NRS 248</strain>
    </source>
</reference>
<feature type="chain" id="PRO_0000158720" description="Adenylate kinase">
    <location>
        <begin position="1"/>
        <end position="216"/>
    </location>
</feature>
<feature type="region of interest" description="NMP" evidence="1">
    <location>
        <begin position="30"/>
        <end position="59"/>
    </location>
</feature>
<feature type="region of interest" description="LID" evidence="1">
    <location>
        <begin position="126"/>
        <end position="163"/>
    </location>
</feature>
<feature type="binding site" evidence="1">
    <location>
        <begin position="10"/>
        <end position="15"/>
    </location>
    <ligand>
        <name>ATP</name>
        <dbReference type="ChEBI" id="CHEBI:30616"/>
    </ligand>
</feature>
<feature type="binding site" evidence="1">
    <location>
        <position position="31"/>
    </location>
    <ligand>
        <name>AMP</name>
        <dbReference type="ChEBI" id="CHEBI:456215"/>
    </ligand>
</feature>
<feature type="binding site" evidence="1">
    <location>
        <position position="36"/>
    </location>
    <ligand>
        <name>AMP</name>
        <dbReference type="ChEBI" id="CHEBI:456215"/>
    </ligand>
</feature>
<feature type="binding site" evidence="1">
    <location>
        <begin position="57"/>
        <end position="59"/>
    </location>
    <ligand>
        <name>AMP</name>
        <dbReference type="ChEBI" id="CHEBI:456215"/>
    </ligand>
</feature>
<feature type="binding site" evidence="1">
    <location>
        <begin position="85"/>
        <end position="88"/>
    </location>
    <ligand>
        <name>AMP</name>
        <dbReference type="ChEBI" id="CHEBI:456215"/>
    </ligand>
</feature>
<feature type="binding site" evidence="1">
    <location>
        <position position="92"/>
    </location>
    <ligand>
        <name>AMP</name>
        <dbReference type="ChEBI" id="CHEBI:456215"/>
    </ligand>
</feature>
<feature type="binding site" evidence="1">
    <location>
        <position position="127"/>
    </location>
    <ligand>
        <name>ATP</name>
        <dbReference type="ChEBI" id="CHEBI:30616"/>
    </ligand>
</feature>
<feature type="binding site" evidence="1">
    <location>
        <position position="130"/>
    </location>
    <ligand>
        <name>Zn(2+)</name>
        <dbReference type="ChEBI" id="CHEBI:29105"/>
        <note>structural</note>
    </ligand>
</feature>
<feature type="binding site" evidence="1">
    <location>
        <position position="133"/>
    </location>
    <ligand>
        <name>Zn(2+)</name>
        <dbReference type="ChEBI" id="CHEBI:29105"/>
        <note>structural</note>
    </ligand>
</feature>
<feature type="binding site" evidence="1">
    <location>
        <begin position="136"/>
        <end position="137"/>
    </location>
    <ligand>
        <name>ATP</name>
        <dbReference type="ChEBI" id="CHEBI:30616"/>
    </ligand>
</feature>
<feature type="binding site" evidence="1">
    <location>
        <position position="150"/>
    </location>
    <ligand>
        <name>Zn(2+)</name>
        <dbReference type="ChEBI" id="CHEBI:29105"/>
        <note>structural</note>
    </ligand>
</feature>
<feature type="binding site" evidence="1">
    <location>
        <position position="153"/>
    </location>
    <ligand>
        <name>Zn(2+)</name>
        <dbReference type="ChEBI" id="CHEBI:29105"/>
        <note>structural</note>
    </ligand>
</feature>
<feature type="binding site" evidence="1">
    <location>
        <position position="160"/>
    </location>
    <ligand>
        <name>AMP</name>
        <dbReference type="ChEBI" id="CHEBI:456215"/>
    </ligand>
</feature>
<feature type="binding site" evidence="1">
    <location>
        <position position="171"/>
    </location>
    <ligand>
        <name>AMP</name>
        <dbReference type="ChEBI" id="CHEBI:456215"/>
    </ligand>
</feature>
<feature type="binding site" evidence="1">
    <location>
        <position position="199"/>
    </location>
    <ligand>
        <name>ATP</name>
        <dbReference type="ChEBI" id="CHEBI:30616"/>
    </ligand>
</feature>
<protein>
    <recommendedName>
        <fullName evidence="1">Adenylate kinase</fullName>
        <shortName evidence="1">AK</shortName>
        <ecNumber evidence="1">2.7.4.3</ecNumber>
    </recommendedName>
    <alternativeName>
        <fullName evidence="1">ATP-AMP transphosphorylase</fullName>
    </alternativeName>
    <alternativeName>
        <fullName evidence="1">ATP:AMP phosphotransferase</fullName>
    </alternativeName>
    <alternativeName>
        <fullName evidence="1">Adenylate monophosphate kinase</fullName>
    </alternativeName>
</protein>
<proteinExistence type="inferred from homology"/>
<organism>
    <name type="scientific">Bacillus cereus (strain ATCC 10987 / NRS 248)</name>
    <dbReference type="NCBI Taxonomy" id="222523"/>
    <lineage>
        <taxon>Bacteria</taxon>
        <taxon>Bacillati</taxon>
        <taxon>Bacillota</taxon>
        <taxon>Bacilli</taxon>
        <taxon>Bacillales</taxon>
        <taxon>Bacillaceae</taxon>
        <taxon>Bacillus</taxon>
        <taxon>Bacillus cereus group</taxon>
    </lineage>
</organism>
<keyword id="KW-0067">ATP-binding</keyword>
<keyword id="KW-0963">Cytoplasm</keyword>
<keyword id="KW-0418">Kinase</keyword>
<keyword id="KW-0479">Metal-binding</keyword>
<keyword id="KW-0545">Nucleotide biosynthesis</keyword>
<keyword id="KW-0547">Nucleotide-binding</keyword>
<keyword id="KW-0808">Transferase</keyword>
<keyword id="KW-0862">Zinc</keyword>
<evidence type="ECO:0000255" key="1">
    <source>
        <dbReference type="HAMAP-Rule" id="MF_00235"/>
    </source>
</evidence>
<name>KAD_BACC1</name>